<feature type="chain" id="PRO_0000196511" description="Trp operon repressor homolog">
    <location>
        <begin position="1"/>
        <end position="102"/>
    </location>
</feature>
<feature type="DNA-binding region" evidence="1">
    <location>
        <begin position="59"/>
        <end position="82"/>
    </location>
</feature>
<dbReference type="EMBL" id="AE004439">
    <property type="protein sequence ID" value="AAK02409.1"/>
    <property type="molecule type" value="Genomic_DNA"/>
</dbReference>
<dbReference type="RefSeq" id="WP_005751246.1">
    <property type="nucleotide sequence ID" value="NC_002663.1"/>
</dbReference>
<dbReference type="SMR" id="Q9CNU9"/>
<dbReference type="STRING" id="272843.PM0325"/>
<dbReference type="EnsemblBacteria" id="AAK02409">
    <property type="protein sequence ID" value="AAK02409"/>
    <property type="gene ID" value="PM0325"/>
</dbReference>
<dbReference type="GeneID" id="77206188"/>
<dbReference type="KEGG" id="pmu:PM0325"/>
<dbReference type="HOGENOM" id="CLU_147939_0_0_6"/>
<dbReference type="OrthoDB" id="5704033at2"/>
<dbReference type="Proteomes" id="UP000000809">
    <property type="component" value="Chromosome"/>
</dbReference>
<dbReference type="GO" id="GO:0005737">
    <property type="term" value="C:cytoplasm"/>
    <property type="evidence" value="ECO:0007669"/>
    <property type="project" value="UniProtKB-SubCell"/>
</dbReference>
<dbReference type="GO" id="GO:0003700">
    <property type="term" value="F:DNA-binding transcription factor activity"/>
    <property type="evidence" value="ECO:0007669"/>
    <property type="project" value="InterPro"/>
</dbReference>
<dbReference type="GO" id="GO:0043565">
    <property type="term" value="F:sequence-specific DNA binding"/>
    <property type="evidence" value="ECO:0007669"/>
    <property type="project" value="InterPro"/>
</dbReference>
<dbReference type="GO" id="GO:0045892">
    <property type="term" value="P:negative regulation of DNA-templated transcription"/>
    <property type="evidence" value="ECO:0007669"/>
    <property type="project" value="UniProtKB-UniRule"/>
</dbReference>
<dbReference type="Gene3D" id="1.10.1270.10">
    <property type="entry name" value="TrpR-like"/>
    <property type="match status" value="1"/>
</dbReference>
<dbReference type="HAMAP" id="MF_00475">
    <property type="entry name" value="Trp_repressor"/>
    <property type="match status" value="1"/>
</dbReference>
<dbReference type="InterPro" id="IPR000831">
    <property type="entry name" value="Trp_repress"/>
</dbReference>
<dbReference type="InterPro" id="IPR013335">
    <property type="entry name" value="Trp_repress_bac"/>
</dbReference>
<dbReference type="InterPro" id="IPR010921">
    <property type="entry name" value="Trp_repressor/repl_initiator"/>
</dbReference>
<dbReference type="InterPro" id="IPR038116">
    <property type="entry name" value="TrpR-like_sf"/>
</dbReference>
<dbReference type="NCBIfam" id="TIGR01321">
    <property type="entry name" value="TrpR"/>
    <property type="match status" value="1"/>
</dbReference>
<dbReference type="PANTHER" id="PTHR38025">
    <property type="entry name" value="TRP OPERON REPRESSOR"/>
    <property type="match status" value="1"/>
</dbReference>
<dbReference type="PANTHER" id="PTHR38025:SF1">
    <property type="entry name" value="TRP OPERON REPRESSOR"/>
    <property type="match status" value="1"/>
</dbReference>
<dbReference type="Pfam" id="PF01371">
    <property type="entry name" value="Trp_repressor"/>
    <property type="match status" value="1"/>
</dbReference>
<dbReference type="PIRSF" id="PIRSF003196">
    <property type="entry name" value="Trp_repressor"/>
    <property type="match status" value="1"/>
</dbReference>
<dbReference type="SUPFAM" id="SSF48295">
    <property type="entry name" value="TrpR-like"/>
    <property type="match status" value="1"/>
</dbReference>
<comment type="function">
    <text evidence="1">This protein is an aporepressor. When complexed with L-tryptophan it binds the operator region of the trp operon and prevents the initiation of transcription (By similarity).</text>
</comment>
<comment type="subunit">
    <text evidence="1">Homodimer.</text>
</comment>
<comment type="subcellular location">
    <subcellularLocation>
        <location evidence="1">Cytoplasm</location>
    </subcellularLocation>
</comment>
<comment type="similarity">
    <text evidence="2">Belongs to the TrpR family.</text>
</comment>
<proteinExistence type="inferred from homology"/>
<evidence type="ECO:0000250" key="1"/>
<evidence type="ECO:0000305" key="2"/>
<name>TRPR_PASMU</name>
<accession>Q9CNU9</accession>
<organism>
    <name type="scientific">Pasteurella multocida (strain Pm70)</name>
    <dbReference type="NCBI Taxonomy" id="272843"/>
    <lineage>
        <taxon>Bacteria</taxon>
        <taxon>Pseudomonadati</taxon>
        <taxon>Pseudomonadota</taxon>
        <taxon>Gammaproteobacteria</taxon>
        <taxon>Pasteurellales</taxon>
        <taxon>Pasteurellaceae</taxon>
        <taxon>Pasteurella</taxon>
    </lineage>
</organism>
<reference key="1">
    <citation type="journal article" date="2001" name="Proc. Natl. Acad. Sci. U.S.A.">
        <title>Complete genomic sequence of Pasteurella multocida Pm70.</title>
        <authorList>
            <person name="May B.J."/>
            <person name="Zhang Q."/>
            <person name="Li L.L."/>
            <person name="Paustian M.L."/>
            <person name="Whittam T.S."/>
            <person name="Kapur V."/>
        </authorList>
    </citation>
    <scope>NUCLEOTIDE SEQUENCE [LARGE SCALE GENOMIC DNA]</scope>
    <source>
        <strain>Pm70</strain>
    </source>
</reference>
<keyword id="KW-0963">Cytoplasm</keyword>
<keyword id="KW-0238">DNA-binding</keyword>
<keyword id="KW-1185">Reference proteome</keyword>
<keyword id="KW-0678">Repressor</keyword>
<keyword id="KW-0804">Transcription</keyword>
<keyword id="KW-0805">Transcription regulation</keyword>
<protein>
    <recommendedName>
        <fullName>Trp operon repressor homolog</fullName>
    </recommendedName>
</protein>
<gene>
    <name type="primary">trpR</name>
    <name type="ordered locus">PM0325</name>
</gene>
<sequence length="102" mass="11774">MYLSRNLEQWHAFVEMLRTAFAQGKEQEILTLLLTPDERDSVGLRLQIVAQLLDKSVPQREIQQNLNTSAATITRGSNMIKTMPPEFMAWVKEQLDEQAKKD</sequence>